<sequence length="644" mass="71764">MIPAHWLYCLMLLLPIESCRILCQASSKSKEKVTSRPHDVCDGVCNNNGTPCFQSCPPDSEGNMKFACKAKKWHKVTETCHTLNTHSIFEEDKELYSVQSSDSTIRTHMFHRELKTIMDTLMEKCPKDLSCVIKGIERSPRMPGNIAVVVQLLHNISTTLTKDVNEEKMQSYSAMANHILNSKSISNWTFIQDRNSSCVLLQSIHSFASKLFMKEHLINISHVFIHTLGTVVSRGSLGKNFTFSMRINETSDKVTGRLLLSPEELQKVPSAFQVISIAFPTLGAILEASLLENVTVNGLVLSVILPEELKNISLIFEKIRKSGERKSQCVGWHSLESRWDWRACKTIQENSRQAVCRCRPNKLYTSFSILMSPNTLESPVLTYITYIGLGISICSLIICLAIEVLVWSQVTKTEISYLRHLCIANIAATLLMADAWFIVASFLSGPVLHHNGCVAATFFVHFFYLSVFFWMLAKALLILYGILIVFHTLPKSCLVASLFSVGYGCPLVIAIITLAVTEPGKGYLRPEACWLNWDMTKALLAFVVPALAIVVVNLITVTMVIIKTQRAAIGSSMFQEVRAIVRICKNIAILTPLLGLTWGFGIATVINGHSLAFHIIFSLLNALQVSPDAAVDSELRECVHRFCG</sequence>
<protein>
    <recommendedName>
        <fullName>Adhesion G-protein coupled receptor F2</fullName>
    </recommendedName>
    <alternativeName>
        <fullName>G-protein coupled receptor 111</fullName>
    </alternativeName>
    <alternativeName>
        <fullName>G-protein coupled receptor PGR20</fullName>
    </alternativeName>
</protein>
<dbReference type="EMBL" id="AC117257">
    <property type="status" value="NOT_ANNOTATED_CDS"/>
    <property type="molecule type" value="Genomic_DNA"/>
</dbReference>
<dbReference type="EMBL" id="BC141353">
    <property type="protein sequence ID" value="AAI41354.1"/>
    <property type="molecule type" value="mRNA"/>
</dbReference>
<dbReference type="CCDS" id="CCDS28792.2"/>
<dbReference type="RefSeq" id="NP_001028665.2">
    <property type="nucleotide sequence ID" value="NM_001033493.2"/>
</dbReference>
<dbReference type="SMR" id="E9Q4J9"/>
<dbReference type="STRING" id="10090.ENSMUSP00000109244"/>
<dbReference type="GlyCosmos" id="E9Q4J9">
    <property type="glycosylation" value="4 sites, No reported glycans"/>
</dbReference>
<dbReference type="GlyGen" id="E9Q4J9">
    <property type="glycosylation" value="7 sites, 3 N-linked glycans (3 sites), 1 O-linked glycan (1 site)"/>
</dbReference>
<dbReference type="iPTMnet" id="E9Q4J9"/>
<dbReference type="PhosphoSitePlus" id="E9Q4J9"/>
<dbReference type="jPOST" id="E9Q4J9"/>
<dbReference type="PaxDb" id="10090-ENSMUSP00000109244"/>
<dbReference type="ProteomicsDB" id="296131"/>
<dbReference type="Antibodypedia" id="30795">
    <property type="antibodies" value="101 antibodies from 21 providers"/>
</dbReference>
<dbReference type="DNASU" id="435529"/>
<dbReference type="Ensembl" id="ENSMUST00000113614.3">
    <property type="protein sequence ID" value="ENSMUSP00000109244.3"/>
    <property type="gene ID" value="ENSMUSG00000057899.8"/>
</dbReference>
<dbReference type="GeneID" id="435529"/>
<dbReference type="KEGG" id="mmu:435529"/>
<dbReference type="UCSC" id="uc008cos.1">
    <property type="organism name" value="mouse"/>
</dbReference>
<dbReference type="AGR" id="MGI:2182728"/>
<dbReference type="CTD" id="435529"/>
<dbReference type="MGI" id="MGI:2182728">
    <property type="gene designation" value="Adgrf2"/>
</dbReference>
<dbReference type="VEuPathDB" id="HostDB:ENSMUSG00000057899"/>
<dbReference type="eggNOG" id="KOG4193">
    <property type="taxonomic scope" value="Eukaryota"/>
</dbReference>
<dbReference type="GeneTree" id="ENSGT00940000162401"/>
<dbReference type="HOGENOM" id="CLU_002753_3_6_1"/>
<dbReference type="InParanoid" id="E9Q4J9"/>
<dbReference type="OrthoDB" id="10040049at2759"/>
<dbReference type="PhylomeDB" id="E9Q4J9"/>
<dbReference type="TreeFam" id="TF316380"/>
<dbReference type="BioGRID-ORCS" id="435529">
    <property type="hits" value="1 hit in 76 CRISPR screens"/>
</dbReference>
<dbReference type="ChiTaRS" id="Adgrf2">
    <property type="organism name" value="mouse"/>
</dbReference>
<dbReference type="PRO" id="PR:E9Q4J9"/>
<dbReference type="Proteomes" id="UP000000589">
    <property type="component" value="Chromosome 17"/>
</dbReference>
<dbReference type="RNAct" id="E9Q4J9">
    <property type="molecule type" value="protein"/>
</dbReference>
<dbReference type="Bgee" id="ENSMUSG00000057899">
    <property type="expression patterns" value="Expressed in esophagus and 17 other cell types or tissues"/>
</dbReference>
<dbReference type="ExpressionAtlas" id="E9Q4J9">
    <property type="expression patterns" value="baseline and differential"/>
</dbReference>
<dbReference type="GO" id="GO:0016020">
    <property type="term" value="C:membrane"/>
    <property type="evidence" value="ECO:0007669"/>
    <property type="project" value="UniProtKB-SubCell"/>
</dbReference>
<dbReference type="GO" id="GO:0004930">
    <property type="term" value="F:G protein-coupled receptor activity"/>
    <property type="evidence" value="ECO:0007669"/>
    <property type="project" value="InterPro"/>
</dbReference>
<dbReference type="GO" id="GO:0007166">
    <property type="term" value="P:cell surface receptor signaling pathway"/>
    <property type="evidence" value="ECO:0007669"/>
    <property type="project" value="InterPro"/>
</dbReference>
<dbReference type="FunFam" id="2.60.220.50:FF:000015">
    <property type="entry name" value="Adhesion G protein-coupled receptor F4"/>
    <property type="match status" value="1"/>
</dbReference>
<dbReference type="FunFam" id="1.20.1070.10:FF:000058">
    <property type="entry name" value="Adhesion G protein-coupled receptor F5"/>
    <property type="match status" value="1"/>
</dbReference>
<dbReference type="Gene3D" id="2.60.220.50">
    <property type="match status" value="1"/>
</dbReference>
<dbReference type="Gene3D" id="1.20.1070.10">
    <property type="entry name" value="Rhodopsin 7-helix transmembrane proteins"/>
    <property type="match status" value="1"/>
</dbReference>
<dbReference type="InterPro" id="IPR051587">
    <property type="entry name" value="Adhesion_GPCR"/>
</dbReference>
<dbReference type="InterPro" id="IPR057244">
    <property type="entry name" value="GAIN_B"/>
</dbReference>
<dbReference type="InterPro" id="IPR046338">
    <property type="entry name" value="GAIN_dom_sf"/>
</dbReference>
<dbReference type="InterPro" id="IPR017981">
    <property type="entry name" value="GPCR_2-like_7TM"/>
</dbReference>
<dbReference type="InterPro" id="IPR000832">
    <property type="entry name" value="GPCR_2_secretin-like"/>
</dbReference>
<dbReference type="InterPro" id="IPR000203">
    <property type="entry name" value="GPS"/>
</dbReference>
<dbReference type="PANTHER" id="PTHR45813:SF6">
    <property type="entry name" value="ADHESION G-PROTEIN COUPLED RECEPTOR F2"/>
    <property type="match status" value="1"/>
</dbReference>
<dbReference type="PANTHER" id="PTHR45813">
    <property type="entry name" value="IG-LIKE DOMAIN-CONTAINING PROTEIN"/>
    <property type="match status" value="1"/>
</dbReference>
<dbReference type="Pfam" id="PF00002">
    <property type="entry name" value="7tm_2"/>
    <property type="match status" value="1"/>
</dbReference>
<dbReference type="Pfam" id="PF01825">
    <property type="entry name" value="GPS"/>
    <property type="match status" value="1"/>
</dbReference>
<dbReference type="PRINTS" id="PR00249">
    <property type="entry name" value="GPCRSECRETIN"/>
</dbReference>
<dbReference type="SMART" id="SM00303">
    <property type="entry name" value="GPS"/>
    <property type="match status" value="1"/>
</dbReference>
<dbReference type="PROSITE" id="PS50261">
    <property type="entry name" value="G_PROTEIN_RECEP_F2_4"/>
    <property type="match status" value="1"/>
</dbReference>
<dbReference type="PROSITE" id="PS50221">
    <property type="entry name" value="GAIN_B"/>
    <property type="match status" value="1"/>
</dbReference>
<comment type="function">
    <text>Orphan receptor.</text>
</comment>
<comment type="subcellular location">
    <subcellularLocation>
        <location evidence="1">Membrane</location>
        <topology evidence="1">Multi-pass membrane protein</topology>
    </subcellularLocation>
</comment>
<comment type="tissue specificity">
    <text evidence="3">Mainly expressed in skin and heart, and very weakly in lung and spleen. Detected in all epidermal layers of skin.</text>
</comment>
<comment type="developmental stage">
    <text evidence="3">Expressed during embryonic development in the skin starting at embryonic day 12 with the formation of the basal layer of the skin.</text>
</comment>
<comment type="disruption phenotype">
    <text evidence="3">No visible phenotype.</text>
</comment>
<comment type="miscellaneous">
    <text evidence="3">Most adhesion GPCRs undergo autoproteolysis at the GPS domain. ADGRF2 is not autoproteolyzed at the GPS motif because of the lack of a consensus catalytic triad sequence within GPS region of the GAIN-B domain.</text>
</comment>
<comment type="similarity">
    <text evidence="4">Belongs to the G-protein coupled receptor 2 family. Adhesion G-protein coupled receptor (ADGR) subfamily.</text>
</comment>
<evidence type="ECO:0000255" key="1"/>
<evidence type="ECO:0000255" key="2">
    <source>
        <dbReference type="PROSITE-ProRule" id="PRU00098"/>
    </source>
</evidence>
<evidence type="ECO:0000269" key="3">
    <source>
    </source>
</evidence>
<evidence type="ECO:0000305" key="4"/>
<reference key="1">
    <citation type="journal article" date="2009" name="PLoS Biol.">
        <title>Lineage-specific biology revealed by a finished genome assembly of the mouse.</title>
        <authorList>
            <person name="Church D.M."/>
            <person name="Goodstadt L."/>
            <person name="Hillier L.W."/>
            <person name="Zody M.C."/>
            <person name="Goldstein S."/>
            <person name="She X."/>
            <person name="Bult C.J."/>
            <person name="Agarwala R."/>
            <person name="Cherry J.L."/>
            <person name="DiCuccio M."/>
            <person name="Hlavina W."/>
            <person name="Kapustin Y."/>
            <person name="Meric P."/>
            <person name="Maglott D."/>
            <person name="Birtle Z."/>
            <person name="Marques A.C."/>
            <person name="Graves T."/>
            <person name="Zhou S."/>
            <person name="Teague B."/>
            <person name="Potamousis K."/>
            <person name="Churas C."/>
            <person name="Place M."/>
            <person name="Herschleb J."/>
            <person name="Runnheim R."/>
            <person name="Forrest D."/>
            <person name="Amos-Landgraf J."/>
            <person name="Schwartz D.C."/>
            <person name="Cheng Z."/>
            <person name="Lindblad-Toh K."/>
            <person name="Eichler E.E."/>
            <person name="Ponting C.P."/>
        </authorList>
    </citation>
    <scope>NUCLEOTIDE SEQUENCE [LARGE SCALE GENOMIC DNA]</scope>
    <source>
        <strain>C57BL/6J</strain>
    </source>
</reference>
<reference key="2">
    <citation type="journal article" date="2004" name="Genome Res.">
        <title>The status, quality, and expansion of the NIH full-length cDNA project: the Mammalian Gene Collection (MGC).</title>
        <authorList>
            <consortium name="The MGC Project Team"/>
        </authorList>
    </citation>
    <scope>NUCLEOTIDE SEQUENCE [LARGE SCALE MRNA]</scope>
    <source>
        <tissue>Brain</tissue>
    </source>
</reference>
<reference key="3">
    <citation type="journal article" date="2012" name="Dev. Dyn.">
        <title>Characterization and functional study of a cluster of four highly conserved orphan adhesion-GPCR in mouse.</title>
        <authorList>
            <person name="Promel S."/>
            <person name="Waller-Evans H."/>
            <person name="Dixon J."/>
            <person name="Zahn D."/>
            <person name="Colledge W.H."/>
            <person name="Doran J."/>
            <person name="Carlton M.B."/>
            <person name="Grosse J."/>
            <person name="Schoneberg T."/>
            <person name="Russ A.P."/>
            <person name="Langenhan T."/>
        </authorList>
    </citation>
    <scope>TISSUE SPECIFICITY</scope>
    <scope>DEVELOPMENTAL STAGE</scope>
    <scope>DISRUPTION PHENOTYPE</scope>
</reference>
<accession>E9Q4J9</accession>
<accession>B9EJ67</accession>
<name>AGRF2_MOUSE</name>
<keyword id="KW-1015">Disulfide bond</keyword>
<keyword id="KW-0325">Glycoprotein</keyword>
<keyword id="KW-0472">Membrane</keyword>
<keyword id="KW-1185">Reference proteome</keyword>
<keyword id="KW-0732">Signal</keyword>
<keyword id="KW-0812">Transmembrane</keyword>
<keyword id="KW-1133">Transmembrane helix</keyword>
<feature type="signal peptide" evidence="1">
    <location>
        <begin position="1"/>
        <end position="18"/>
    </location>
</feature>
<feature type="chain" id="PRO_0000433228" description="Adhesion G-protein coupled receptor F2">
    <location>
        <begin position="19"/>
        <end position="644"/>
    </location>
</feature>
<feature type="topological domain" description="Extracellular" evidence="4">
    <location>
        <begin position="19"/>
        <end position="386"/>
    </location>
</feature>
<feature type="transmembrane region" description="Helical; Name=1" evidence="1">
    <location>
        <begin position="387"/>
        <end position="407"/>
    </location>
</feature>
<feature type="topological domain" description="Cytoplasmic" evidence="4">
    <location>
        <begin position="408"/>
        <end position="422"/>
    </location>
</feature>
<feature type="transmembrane region" description="Helical; Name=2" evidence="1">
    <location>
        <begin position="423"/>
        <end position="443"/>
    </location>
</feature>
<feature type="topological domain" description="Extracellular" evidence="4">
    <location>
        <begin position="444"/>
        <end position="465"/>
    </location>
</feature>
<feature type="transmembrane region" description="Helical; Name=3" evidence="1">
    <location>
        <begin position="466"/>
        <end position="486"/>
    </location>
</feature>
<feature type="topological domain" description="Cytoplasmic" evidence="4">
    <location>
        <begin position="487"/>
        <end position="493"/>
    </location>
</feature>
<feature type="transmembrane region" description="Helical; Name=4" evidence="1">
    <location>
        <begin position="494"/>
        <end position="514"/>
    </location>
</feature>
<feature type="topological domain" description="Extracellular" evidence="4">
    <location>
        <begin position="515"/>
        <end position="541"/>
    </location>
</feature>
<feature type="transmembrane region" description="Helical; Name=5" evidence="1">
    <location>
        <begin position="542"/>
        <end position="562"/>
    </location>
</feature>
<feature type="topological domain" description="Cytoplasmic" evidence="4">
    <location>
        <begin position="563"/>
        <end position="585"/>
    </location>
</feature>
<feature type="transmembrane region" description="Helical; Name=6" evidence="1">
    <location>
        <begin position="586"/>
        <end position="606"/>
    </location>
</feature>
<feature type="topological domain" description="Extracellular" evidence="4">
    <location>
        <begin position="607"/>
        <end position="610"/>
    </location>
</feature>
<feature type="transmembrane region" description="Helical; Name=7" evidence="1">
    <location>
        <begin position="611"/>
        <end position="631"/>
    </location>
</feature>
<feature type="domain" description="GAIN-B" evidence="2">
    <location>
        <begin position="233"/>
        <end position="377"/>
    </location>
</feature>
<feature type="region of interest" description="GPS" evidence="2">
    <location>
        <begin position="329"/>
        <end position="377"/>
    </location>
</feature>
<feature type="glycosylation site" description="N-linked (GlcNAc...) asparagine" evidence="1">
    <location>
        <position position="155"/>
    </location>
</feature>
<feature type="glycosylation site" description="N-linked (GlcNAc...) asparagine" evidence="1">
    <location>
        <position position="219"/>
    </location>
</feature>
<feature type="glycosylation site" description="N-linked (GlcNAc...) asparagine" evidence="1">
    <location>
        <position position="293"/>
    </location>
</feature>
<feature type="glycosylation site" description="N-linked (GlcNAc...) asparagine" evidence="1">
    <location>
        <position position="311"/>
    </location>
</feature>
<feature type="disulfide bond" evidence="2">
    <location>
        <begin position="329"/>
        <end position="356"/>
    </location>
</feature>
<feature type="disulfide bond" evidence="2">
    <location>
        <begin position="344"/>
        <end position="358"/>
    </location>
</feature>
<feature type="sequence conflict" description="In Ref. 2; AAI41354." evidence="4" ref="2">
    <original>W</original>
    <variation>R</variation>
    <location>
        <position position="341"/>
    </location>
</feature>
<proteinExistence type="evidence at transcript level"/>
<gene>
    <name type="primary">Adgrf2</name>
    <name type="synonym">Gpr111</name>
    <name type="synonym">Pgr20</name>
</gene>
<organism>
    <name type="scientific">Mus musculus</name>
    <name type="common">Mouse</name>
    <dbReference type="NCBI Taxonomy" id="10090"/>
    <lineage>
        <taxon>Eukaryota</taxon>
        <taxon>Metazoa</taxon>
        <taxon>Chordata</taxon>
        <taxon>Craniata</taxon>
        <taxon>Vertebrata</taxon>
        <taxon>Euteleostomi</taxon>
        <taxon>Mammalia</taxon>
        <taxon>Eutheria</taxon>
        <taxon>Euarchontoglires</taxon>
        <taxon>Glires</taxon>
        <taxon>Rodentia</taxon>
        <taxon>Myomorpha</taxon>
        <taxon>Muroidea</taxon>
        <taxon>Muridae</taxon>
        <taxon>Murinae</taxon>
        <taxon>Mus</taxon>
        <taxon>Mus</taxon>
    </lineage>
</organism>